<reference key="1">
    <citation type="submission" date="1997-02" db="EMBL/GenBank/DDBJ databases">
        <title>Crimean-Congo hemorrhagic fever virus S segment.</title>
        <authorList>
            <person name="Lofts R."/>
            <person name="Hodgson L."/>
            <person name="Smith J.F."/>
        </authorList>
    </citation>
    <scope>NUCLEOTIDE SEQUENCE [GENOMIC RNA]</scope>
</reference>
<reference key="2">
    <citation type="journal article" date="2016" name="J. Biol. Chem.">
        <title>The Non-structural Protein of Crimean-Congo Hemorrhagic Fever Virus Disrupts the Mitochondrial Membrane Potential and Induces Apoptosis.</title>
        <authorList>
            <person name="Barnwal B."/>
            <person name="Karlberg H."/>
            <person name="Mirazimi A."/>
            <person name="Tan Y.J."/>
        </authorList>
    </citation>
    <scope>FUNCTION</scope>
    <scope>MUTAGENESIS OF LEU-126; LEU-127 AND LEU-135</scope>
    <scope>INDUCTION</scope>
</reference>
<comment type="function">
    <text evidence="1">Disrupts the host mitochondrial membrane potential and induces apoptosis probably by inducing host CASP8 and CASP9.</text>
</comment>
<comment type="induction">
    <text evidence="1">Expressed at 72 hpi, barely detectable at 48 hpi.</text>
</comment>
<comment type="miscellaneous">
    <text evidence="1">Undergoes active degradation during infection.</text>
</comment>
<feature type="chain" id="PRO_0000456446" description="Non-structural protein">
    <location>
        <begin position="1"/>
        <end position="150"/>
    </location>
</feature>
<feature type="region of interest" description="Apoptotic activity" evidence="1">
    <location>
        <begin position="93"/>
        <end position="140"/>
    </location>
</feature>
<feature type="site" description="Important for the disruption of the host mitochondrial membrane potential and the induction of apoptosis" evidence="1">
    <location>
        <position position="127"/>
    </location>
</feature>
<feature type="site" description="Important for the disruption of the host mitochondrial membrane potential and the induction of apoptosis" evidence="1">
    <location>
        <position position="135"/>
    </location>
</feature>
<feature type="mutagenesis site" description="No effect on the induction of host caspases activity and apoptosis." evidence="1">
    <original>L</original>
    <variation>V</variation>
    <location>
        <position position="126"/>
    </location>
</feature>
<feature type="mutagenesis site" description="Decreased host caspases activity and apoptosis." evidence="1">
    <original>L</original>
    <variation>A</variation>
    <location>
        <position position="127"/>
    </location>
</feature>
<feature type="mutagenesis site" description="Decreased host caspases activity and apoptosis." evidence="1">
    <original>L</original>
    <variation>A</variation>
    <location>
        <position position="135"/>
    </location>
</feature>
<organismHost>
    <name type="scientific">Bos taurus</name>
    <name type="common">Bovine</name>
    <dbReference type="NCBI Taxonomy" id="9913"/>
</organismHost>
<organismHost>
    <name type="scientific">Capra hircus</name>
    <name type="common">Goat</name>
    <dbReference type="NCBI Taxonomy" id="9925"/>
</organismHost>
<organismHost>
    <name type="scientific">Homo sapiens</name>
    <name type="common">Human</name>
    <dbReference type="NCBI Taxonomy" id="9606"/>
</organismHost>
<organismHost>
    <name type="scientific">Hyalomma</name>
    <dbReference type="NCBI Taxonomy" id="34625"/>
</organismHost>
<organismHost>
    <name type="scientific">Ovis aries</name>
    <name type="common">Sheep</name>
    <dbReference type="NCBI Taxonomy" id="9940"/>
</organismHost>
<organismHost>
    <name type="scientific">Rhipicephalus microplus</name>
    <name type="common">Cattle tick</name>
    <name type="synonym">Boophilus microplus</name>
    <dbReference type="NCBI Taxonomy" id="6941"/>
</organismHost>
<organism>
    <name type="scientific">Crimean-Congo hemorrhagic fever virus (strain Nigeria/IbAr10200/1970)</name>
    <name type="common">CCHFV</name>
    <dbReference type="NCBI Taxonomy" id="652961"/>
    <lineage>
        <taxon>Viruses</taxon>
        <taxon>Riboviria</taxon>
        <taxon>Orthornavirae</taxon>
        <taxon>Negarnaviricota</taxon>
        <taxon>Polyploviricotina</taxon>
        <taxon>Ellioviricetes</taxon>
        <taxon>Bunyavirales</taxon>
        <taxon>Nairoviridae</taxon>
        <taxon>Orthonairovirus</taxon>
        <taxon>Orthonairovirus haemorrhagiae</taxon>
    </lineage>
</organism>
<accession>P0DTL3</accession>
<name>NSS_CCHFI</name>
<dbReference type="EMBL" id="U88410">
    <property type="status" value="NOT_ANNOTATED_CDS"/>
    <property type="molecule type" value="Genomic_RNA"/>
</dbReference>
<dbReference type="Proteomes" id="UP000008767">
    <property type="component" value="Genome"/>
</dbReference>
<dbReference type="GO" id="GO:0052150">
    <property type="term" value="P:symbiont-mediated perturbation of host apoptosis"/>
    <property type="evidence" value="ECO:0007669"/>
    <property type="project" value="UniProtKB-KW"/>
</dbReference>
<evidence type="ECO:0000269" key="1">
    <source>
    </source>
</evidence>
<evidence type="ECO:0000303" key="2">
    <source>
    </source>
</evidence>
<sequence>MLSALALSTSSLCLSRYPLRASTVFLASSNIPFPSVSASLARPVATSAIPERPDLLMSPHGGLKAMMYLPLTNSLHQSTCSWLTGPRGFSSPPLFRIRFLLLIMSDSISLTDITISPGTLYSARTLLLRAAVLALTRKPMSFLHFKAACW</sequence>
<protein>
    <recommendedName>
        <fullName evidence="2">Non-structural protein</fullName>
        <shortName>NSs</shortName>
    </recommendedName>
</protein>
<keyword id="KW-0945">Host-virus interaction</keyword>
<keyword id="KW-1119">Modulation of host cell apoptosis by virus</keyword>
<keyword id="KW-1185">Reference proteome</keyword>
<proteinExistence type="evidence at protein level"/>